<dbReference type="EMBL" id="AB022882">
    <property type="protein sequence ID" value="BAA84971.1"/>
    <property type="molecule type" value="mRNA"/>
</dbReference>
<dbReference type="EMBL" id="AF234635">
    <property type="protein sequence ID" value="AAF40434.1"/>
    <property type="molecule type" value="mRNA"/>
</dbReference>
<dbReference type="RefSeq" id="NP_620216.1">
    <property type="nucleotide sequence ID" value="NM_138861.1"/>
</dbReference>
<dbReference type="SMR" id="Q9JKL9"/>
<dbReference type="STRING" id="10116.ENSRNOP00000069833"/>
<dbReference type="GlyCosmos" id="Q9JKL9">
    <property type="glycosylation" value="1 site, No reported glycans"/>
</dbReference>
<dbReference type="GlyGen" id="Q9JKL9">
    <property type="glycosylation" value="1 site"/>
</dbReference>
<dbReference type="iPTMnet" id="Q9JKL9"/>
<dbReference type="PhosphoSitePlus" id="Q9JKL9"/>
<dbReference type="PaxDb" id="10116-ENSRNOP00000022871"/>
<dbReference type="GeneID" id="192224"/>
<dbReference type="KEGG" id="rno:192224"/>
<dbReference type="UCSC" id="RGD:620118">
    <property type="organism name" value="rat"/>
</dbReference>
<dbReference type="AGR" id="RGD:620118"/>
<dbReference type="CTD" id="66392"/>
<dbReference type="RGD" id="620118">
    <property type="gene designation" value="Prl2b1"/>
</dbReference>
<dbReference type="eggNOG" id="ENOG502QYU3">
    <property type="taxonomic scope" value="Eukaryota"/>
</dbReference>
<dbReference type="InParanoid" id="Q9JKL9"/>
<dbReference type="OrthoDB" id="9946219at2759"/>
<dbReference type="PhylomeDB" id="Q9JKL9"/>
<dbReference type="PRO" id="PR:Q9JKL9"/>
<dbReference type="Proteomes" id="UP000002494">
    <property type="component" value="Unplaced"/>
</dbReference>
<dbReference type="GO" id="GO:0005615">
    <property type="term" value="C:extracellular space"/>
    <property type="evidence" value="ECO:0000318"/>
    <property type="project" value="GO_Central"/>
</dbReference>
<dbReference type="GO" id="GO:0005179">
    <property type="term" value="F:hormone activity"/>
    <property type="evidence" value="ECO:0000318"/>
    <property type="project" value="GO_Central"/>
</dbReference>
<dbReference type="GO" id="GO:0005148">
    <property type="term" value="F:prolactin receptor binding"/>
    <property type="evidence" value="ECO:0000318"/>
    <property type="project" value="GO_Central"/>
</dbReference>
<dbReference type="GO" id="GO:0007166">
    <property type="term" value="P:cell surface receptor signaling pathway"/>
    <property type="evidence" value="ECO:0000318"/>
    <property type="project" value="GO_Central"/>
</dbReference>
<dbReference type="GO" id="GO:0007565">
    <property type="term" value="P:female pregnancy"/>
    <property type="evidence" value="ECO:0000318"/>
    <property type="project" value="GO_Central"/>
</dbReference>
<dbReference type="GO" id="GO:0030879">
    <property type="term" value="P:mammary gland development"/>
    <property type="evidence" value="ECO:0000318"/>
    <property type="project" value="GO_Central"/>
</dbReference>
<dbReference type="GO" id="GO:1903489">
    <property type="term" value="P:positive regulation of lactation"/>
    <property type="evidence" value="ECO:0000318"/>
    <property type="project" value="GO_Central"/>
</dbReference>
<dbReference type="GO" id="GO:0046427">
    <property type="term" value="P:positive regulation of receptor signaling pathway via JAK-STAT"/>
    <property type="evidence" value="ECO:0000318"/>
    <property type="project" value="GO_Central"/>
</dbReference>
<dbReference type="GO" id="GO:0031667">
    <property type="term" value="P:response to nutrient levels"/>
    <property type="evidence" value="ECO:0000318"/>
    <property type="project" value="GO_Central"/>
</dbReference>
<dbReference type="CDD" id="cd10288">
    <property type="entry name" value="prolactin_like"/>
    <property type="match status" value="1"/>
</dbReference>
<dbReference type="FunFam" id="1.20.1250.10:FF:000061">
    <property type="entry name" value="Prolactin-2B1"/>
    <property type="match status" value="1"/>
</dbReference>
<dbReference type="Gene3D" id="1.20.1250.10">
    <property type="match status" value="1"/>
</dbReference>
<dbReference type="InterPro" id="IPR009079">
    <property type="entry name" value="4_helix_cytokine-like_core"/>
</dbReference>
<dbReference type="InterPro" id="IPR001400">
    <property type="entry name" value="Somatotropin/Prolactin"/>
</dbReference>
<dbReference type="PANTHER" id="PTHR11417:SF35">
    <property type="entry name" value="PROLACTIN-2B1"/>
    <property type="match status" value="1"/>
</dbReference>
<dbReference type="PANTHER" id="PTHR11417">
    <property type="entry name" value="SOMATOTROPIN,PROLACTIN"/>
    <property type="match status" value="1"/>
</dbReference>
<dbReference type="Pfam" id="PF00103">
    <property type="entry name" value="Hormone_1"/>
    <property type="match status" value="1"/>
</dbReference>
<dbReference type="PRINTS" id="PR00836">
    <property type="entry name" value="SOMATOTROPIN"/>
</dbReference>
<dbReference type="SUPFAM" id="SSF47266">
    <property type="entry name" value="4-helical cytokines"/>
    <property type="match status" value="1"/>
</dbReference>
<sequence>MLLYLPQIFSSRASSLLFLVPYLLFWENVASISTCAERDATIQHSLEKLLTLTTFMSHVMSIETAKLFTEFNNQYAQGKRYNDRIPGTCHTAFFDTPVNKEQSLGSDPKTLLKLVRSLLNSWTNALNHLVNEISAMQGDPSFLFSKAREIQAKFDELTTGVKTILSMIGERDNDTHLAWSGLSSLQSSNEDVRCFSFYTLIRCLLRDSRKVNTYLEVIKYQIFNQNNC</sequence>
<name>PR2B1_RAT</name>
<organism>
    <name type="scientific">Rattus norvegicus</name>
    <name type="common">Rat</name>
    <dbReference type="NCBI Taxonomy" id="10116"/>
    <lineage>
        <taxon>Eukaryota</taxon>
        <taxon>Metazoa</taxon>
        <taxon>Chordata</taxon>
        <taxon>Craniata</taxon>
        <taxon>Vertebrata</taxon>
        <taxon>Euteleostomi</taxon>
        <taxon>Mammalia</taxon>
        <taxon>Eutheria</taxon>
        <taxon>Euarchontoglires</taxon>
        <taxon>Glires</taxon>
        <taxon>Rodentia</taxon>
        <taxon>Myomorpha</taxon>
        <taxon>Muroidea</taxon>
        <taxon>Muridae</taxon>
        <taxon>Murinae</taxon>
        <taxon>Rattus</taxon>
    </lineage>
</organism>
<keyword id="KW-1015">Disulfide bond</keyword>
<keyword id="KW-0325">Glycoprotein</keyword>
<keyword id="KW-0372">Hormone</keyword>
<keyword id="KW-1185">Reference proteome</keyword>
<keyword id="KW-0964">Secreted</keyword>
<keyword id="KW-0732">Signal</keyword>
<gene>
    <name type="primary">Prl2b1</name>
    <name type="synonym">Prlpk</name>
</gene>
<feature type="signal peptide" evidence="2">
    <location>
        <begin position="1"/>
        <end position="31"/>
    </location>
</feature>
<feature type="chain" id="PRO_0000045170" description="Prolactin-2B1">
    <location>
        <begin position="32"/>
        <end position="228"/>
    </location>
</feature>
<feature type="glycosylation site" description="N-linked (GlcNAc...) asparagine" evidence="2">
    <location>
        <position position="173"/>
    </location>
</feature>
<feature type="disulfide bond" evidence="1">
    <location>
        <begin position="89"/>
        <end position="194"/>
    </location>
</feature>
<feature type="disulfide bond" evidence="1">
    <location>
        <begin position="203"/>
        <end position="228"/>
    </location>
</feature>
<feature type="sequence conflict" description="In Ref. 2; AAF40434." evidence="4" ref="2">
    <original>TTGV</original>
    <variation>IDGC</variation>
    <location>
        <begin position="158"/>
        <end position="161"/>
    </location>
</feature>
<reference key="1">
    <citation type="journal article" date="1999" name="Biochem. Biophys. Res. Commun.">
        <title>Identification of four members of the rat prolactin/growth hormone gene family.</title>
        <authorList>
            <person name="Ishibashi K."/>
            <person name="Imai M."/>
        </authorList>
    </citation>
    <scope>NUCLEOTIDE SEQUENCE [MRNA]</scope>
</reference>
<reference key="2">
    <citation type="journal article" date="2000" name="J. Endocrinol.">
        <title>Three novel paralogs of the rodent prolactin gene family.</title>
        <authorList>
            <person name="Dai G."/>
            <person name="Wang D."/>
            <person name="Liu B."/>
            <person name="Kasik J.W."/>
            <person name="Mueller H."/>
            <person name="White R.A."/>
            <person name="Hummel G.S."/>
            <person name="Soares M.J."/>
        </authorList>
    </citation>
    <scope>NUCLEOTIDE SEQUENCE [MRNA]</scope>
    <scope>TISSUE SPECIFICITY</scope>
</reference>
<accession>Q9JKL9</accession>
<accession>Q9R0R8</accession>
<comment type="subcellular location">
    <subcellularLocation>
        <location evidence="1">Secreted</location>
    </subcellularLocation>
</comment>
<comment type="tissue specificity">
    <text evidence="3">Expression restricted to the placenta in trophoblast cells within the labyrinth zone.</text>
</comment>
<comment type="developmental stage">
    <text>Expression initiated at midgestation.</text>
</comment>
<comment type="similarity">
    <text evidence="4">Belongs to the somatotropin/prolactin family.</text>
</comment>
<protein>
    <recommendedName>
        <fullName>Prolactin-2B1</fullName>
    </recommendedName>
    <alternativeName>
        <fullName>Placental prolactin-like protein K</fullName>
        <shortName>PLP-K</shortName>
        <shortName>PRL-like protein K</shortName>
    </alternativeName>
</protein>
<proteinExistence type="evidence at transcript level"/>
<evidence type="ECO:0000250" key="1"/>
<evidence type="ECO:0000255" key="2"/>
<evidence type="ECO:0000269" key="3">
    <source>
    </source>
</evidence>
<evidence type="ECO:0000305" key="4"/>